<name>RS21_ECOHS</name>
<dbReference type="EMBL" id="CP000802">
    <property type="protein sequence ID" value="ABV07476.1"/>
    <property type="molecule type" value="Genomic_DNA"/>
</dbReference>
<dbReference type="RefSeq" id="WP_001144069.1">
    <property type="nucleotide sequence ID" value="NC_009800.1"/>
</dbReference>
<dbReference type="EMDB" id="EMD-7014"/>
<dbReference type="EMDB" id="EMD-7015"/>
<dbReference type="EMDB" id="EMD-7016"/>
<dbReference type="EMDB" id="EMD-8826"/>
<dbReference type="EMDB" id="EMD-8829"/>
<dbReference type="SMR" id="A8A4M2"/>
<dbReference type="GeneID" id="98390195"/>
<dbReference type="KEGG" id="ecx:EcHS_A3245"/>
<dbReference type="HOGENOM" id="CLU_159258_1_0_6"/>
<dbReference type="GO" id="GO:1990904">
    <property type="term" value="C:ribonucleoprotein complex"/>
    <property type="evidence" value="ECO:0007669"/>
    <property type="project" value="UniProtKB-KW"/>
</dbReference>
<dbReference type="GO" id="GO:0005840">
    <property type="term" value="C:ribosome"/>
    <property type="evidence" value="ECO:0007669"/>
    <property type="project" value="UniProtKB-KW"/>
</dbReference>
<dbReference type="GO" id="GO:0003735">
    <property type="term" value="F:structural constituent of ribosome"/>
    <property type="evidence" value="ECO:0007669"/>
    <property type="project" value="InterPro"/>
</dbReference>
<dbReference type="GO" id="GO:0006412">
    <property type="term" value="P:translation"/>
    <property type="evidence" value="ECO:0007669"/>
    <property type="project" value="UniProtKB-UniRule"/>
</dbReference>
<dbReference type="FunFam" id="1.20.5.1150:FF:000001">
    <property type="entry name" value="30S ribosomal protein S21"/>
    <property type="match status" value="1"/>
</dbReference>
<dbReference type="Gene3D" id="1.20.5.1150">
    <property type="entry name" value="Ribosomal protein S8"/>
    <property type="match status" value="1"/>
</dbReference>
<dbReference type="HAMAP" id="MF_00358">
    <property type="entry name" value="Ribosomal_bS21"/>
    <property type="match status" value="1"/>
</dbReference>
<dbReference type="InterPro" id="IPR001911">
    <property type="entry name" value="Ribosomal_bS21"/>
</dbReference>
<dbReference type="InterPro" id="IPR018278">
    <property type="entry name" value="Ribosomal_bS21_CS"/>
</dbReference>
<dbReference type="InterPro" id="IPR038380">
    <property type="entry name" value="Ribosomal_bS21_sf"/>
</dbReference>
<dbReference type="NCBIfam" id="TIGR00030">
    <property type="entry name" value="S21p"/>
    <property type="match status" value="1"/>
</dbReference>
<dbReference type="PANTHER" id="PTHR21109">
    <property type="entry name" value="MITOCHONDRIAL 28S RIBOSOMAL PROTEIN S21"/>
    <property type="match status" value="1"/>
</dbReference>
<dbReference type="PANTHER" id="PTHR21109:SF22">
    <property type="entry name" value="SMALL RIBOSOMAL SUBUNIT PROTEIN BS21"/>
    <property type="match status" value="1"/>
</dbReference>
<dbReference type="Pfam" id="PF01165">
    <property type="entry name" value="Ribosomal_S21"/>
    <property type="match status" value="1"/>
</dbReference>
<dbReference type="PRINTS" id="PR00976">
    <property type="entry name" value="RIBOSOMALS21"/>
</dbReference>
<dbReference type="PROSITE" id="PS01181">
    <property type="entry name" value="RIBOSOMAL_S21"/>
    <property type="match status" value="1"/>
</dbReference>
<sequence length="71" mass="8500">MPVIKVRENEPFDVALRRFKRSCEKAGVLAEVRRREFYEKPTTERKRAKASAVKRHAKKLARENARRTRLY</sequence>
<feature type="chain" id="PRO_1000059846" description="Small ribosomal subunit protein bS21">
    <location>
        <begin position="1"/>
        <end position="71"/>
    </location>
</feature>
<feature type="region of interest" description="Disordered" evidence="2">
    <location>
        <begin position="43"/>
        <end position="71"/>
    </location>
</feature>
<feature type="compositionally biased region" description="Basic residues" evidence="2">
    <location>
        <begin position="46"/>
        <end position="59"/>
    </location>
</feature>
<feature type="compositionally biased region" description="Basic and acidic residues" evidence="2">
    <location>
        <begin position="60"/>
        <end position="71"/>
    </location>
</feature>
<reference key="1">
    <citation type="journal article" date="2008" name="J. Bacteriol.">
        <title>The pangenome structure of Escherichia coli: comparative genomic analysis of E. coli commensal and pathogenic isolates.</title>
        <authorList>
            <person name="Rasko D.A."/>
            <person name="Rosovitz M.J."/>
            <person name="Myers G.S.A."/>
            <person name="Mongodin E.F."/>
            <person name="Fricke W.F."/>
            <person name="Gajer P."/>
            <person name="Crabtree J."/>
            <person name="Sebaihia M."/>
            <person name="Thomson N.R."/>
            <person name="Chaudhuri R."/>
            <person name="Henderson I.R."/>
            <person name="Sperandio V."/>
            <person name="Ravel J."/>
        </authorList>
    </citation>
    <scope>NUCLEOTIDE SEQUENCE [LARGE SCALE GENOMIC DNA]</scope>
    <source>
        <strain>HS</strain>
    </source>
</reference>
<proteinExistence type="inferred from homology"/>
<gene>
    <name evidence="1" type="primary">rpsU</name>
    <name type="ordered locus">EcHS_A3245</name>
</gene>
<protein>
    <recommendedName>
        <fullName evidence="1">Small ribosomal subunit protein bS21</fullName>
    </recommendedName>
    <alternativeName>
        <fullName evidence="3">30S ribosomal protein S21</fullName>
    </alternativeName>
</protein>
<comment type="similarity">
    <text evidence="1">Belongs to the bacterial ribosomal protein bS21 family.</text>
</comment>
<organism>
    <name type="scientific">Escherichia coli O9:H4 (strain HS)</name>
    <dbReference type="NCBI Taxonomy" id="331112"/>
    <lineage>
        <taxon>Bacteria</taxon>
        <taxon>Pseudomonadati</taxon>
        <taxon>Pseudomonadota</taxon>
        <taxon>Gammaproteobacteria</taxon>
        <taxon>Enterobacterales</taxon>
        <taxon>Enterobacteriaceae</taxon>
        <taxon>Escherichia</taxon>
    </lineage>
</organism>
<evidence type="ECO:0000255" key="1">
    <source>
        <dbReference type="HAMAP-Rule" id="MF_00358"/>
    </source>
</evidence>
<evidence type="ECO:0000256" key="2">
    <source>
        <dbReference type="SAM" id="MobiDB-lite"/>
    </source>
</evidence>
<evidence type="ECO:0000305" key="3"/>
<keyword id="KW-0687">Ribonucleoprotein</keyword>
<keyword id="KW-0689">Ribosomal protein</keyword>
<accession>A8A4M2</accession>